<protein>
    <recommendedName>
        <fullName evidence="1">Peptidase E</fullName>
        <ecNumber evidence="1">3.4.13.21</ecNumber>
    </recommendedName>
    <alternativeName>
        <fullName evidence="1">Alpha-aspartyl dipeptidase</fullName>
    </alternativeName>
    <alternativeName>
        <fullName evidence="1">Asp-specific dipeptidase</fullName>
    </alternativeName>
    <alternativeName>
        <fullName evidence="1">Dipeptidase E</fullName>
    </alternativeName>
</protein>
<evidence type="ECO:0000255" key="1">
    <source>
        <dbReference type="HAMAP-Rule" id="MF_00510"/>
    </source>
</evidence>
<comment type="function">
    <text evidence="1">Hydrolyzes dipeptides containing N-terminal aspartate residues. May play a role in allowing the cell to use peptide aspartate to spare carbon otherwise required for the synthesis of the aspartate family of amino acids.</text>
</comment>
<comment type="catalytic activity">
    <reaction evidence="1">
        <text>Dipeptidase E catalyzes the hydrolysis of dipeptides Asp-|-Xaa. It does not act on peptides with N-terminal Glu, Asn or Gln, nor does it cleave isoaspartyl peptides.</text>
        <dbReference type="EC" id="3.4.13.21"/>
    </reaction>
</comment>
<comment type="subcellular location">
    <subcellularLocation>
        <location evidence="1">Cytoplasm</location>
    </subcellularLocation>
</comment>
<comment type="similarity">
    <text evidence="1">Belongs to the peptidase S51 family.</text>
</comment>
<proteinExistence type="inferred from homology"/>
<reference key="1">
    <citation type="journal article" date="2009" name="BMC Genomics">
        <title>Pseudogene accumulation in the evolutionary histories of Salmonella enterica serovars Paratyphi A and Typhi.</title>
        <authorList>
            <person name="Holt K.E."/>
            <person name="Thomson N.R."/>
            <person name="Wain J."/>
            <person name="Langridge G.C."/>
            <person name="Hasan R."/>
            <person name="Bhutta Z.A."/>
            <person name="Quail M.A."/>
            <person name="Norbertczak H."/>
            <person name="Walker D."/>
            <person name="Simmonds M."/>
            <person name="White B."/>
            <person name="Bason N."/>
            <person name="Mungall K."/>
            <person name="Dougan G."/>
            <person name="Parkhill J."/>
        </authorList>
    </citation>
    <scope>NUCLEOTIDE SEQUENCE [LARGE SCALE GENOMIC DNA]</scope>
    <source>
        <strain>AKU_12601</strain>
    </source>
</reference>
<keyword id="KW-0963">Cytoplasm</keyword>
<keyword id="KW-0224">Dipeptidase</keyword>
<keyword id="KW-0378">Hydrolase</keyword>
<keyword id="KW-0645">Protease</keyword>
<keyword id="KW-0720">Serine protease</keyword>
<sequence length="229" mass="24823">MELLLLSNSTLPGKAWLEHALPLIANQLNGRRSAVFIPFAGVTQTWDEYTDKTAEVLAPLGINVTGIHRVADPLAAIEKAEIIIVGGGNTFQLLKESRERELLAPVADRVKRGALYIGWSAGANLACPTIRTTNDMPIVDPNGFDALDLFPLQINPHFTNALPEGHKGETREQRIRELLVVAPELTVIGLPEGNWIQVSNGQAVLGGPNTTWVFKAGEEAVALEAGHRF</sequence>
<dbReference type="EC" id="3.4.13.21" evidence="1"/>
<dbReference type="EMBL" id="FM200053">
    <property type="protein sequence ID" value="CAR62021.1"/>
    <property type="molecule type" value="Genomic_DNA"/>
</dbReference>
<dbReference type="RefSeq" id="WP_000421773.1">
    <property type="nucleotide sequence ID" value="NC_011147.1"/>
</dbReference>
<dbReference type="SMR" id="B5BJT4"/>
<dbReference type="MEROPS" id="S51.001"/>
<dbReference type="KEGG" id="sek:SSPA3737"/>
<dbReference type="HOGENOM" id="CLU_071689_0_0_6"/>
<dbReference type="Proteomes" id="UP000001869">
    <property type="component" value="Chromosome"/>
</dbReference>
<dbReference type="GO" id="GO:0005737">
    <property type="term" value="C:cytoplasm"/>
    <property type="evidence" value="ECO:0007669"/>
    <property type="project" value="UniProtKB-SubCell"/>
</dbReference>
<dbReference type="GO" id="GO:0016805">
    <property type="term" value="F:dipeptidase activity"/>
    <property type="evidence" value="ECO:0007669"/>
    <property type="project" value="UniProtKB-UniRule"/>
</dbReference>
<dbReference type="GO" id="GO:0008236">
    <property type="term" value="F:serine-type peptidase activity"/>
    <property type="evidence" value="ECO:0007669"/>
    <property type="project" value="UniProtKB-KW"/>
</dbReference>
<dbReference type="GO" id="GO:0006508">
    <property type="term" value="P:proteolysis"/>
    <property type="evidence" value="ECO:0007669"/>
    <property type="project" value="UniProtKB-UniRule"/>
</dbReference>
<dbReference type="CDD" id="cd03146">
    <property type="entry name" value="GAT1_Peptidase_E"/>
    <property type="match status" value="1"/>
</dbReference>
<dbReference type="FunFam" id="3.40.50.880:FF:000007">
    <property type="entry name" value="Peptidase E"/>
    <property type="match status" value="1"/>
</dbReference>
<dbReference type="Gene3D" id="3.40.50.880">
    <property type="match status" value="1"/>
</dbReference>
<dbReference type="HAMAP" id="MF_00510">
    <property type="entry name" value="Peptidase_E"/>
    <property type="match status" value="1"/>
</dbReference>
<dbReference type="InterPro" id="IPR029062">
    <property type="entry name" value="Class_I_gatase-like"/>
</dbReference>
<dbReference type="InterPro" id="IPR005320">
    <property type="entry name" value="Peptidase_S51"/>
</dbReference>
<dbReference type="InterPro" id="IPR023172">
    <property type="entry name" value="Peptidase_S51_dipeptidase-E"/>
</dbReference>
<dbReference type="NCBIfam" id="NF003642">
    <property type="entry name" value="PRK05282.1"/>
    <property type="match status" value="1"/>
</dbReference>
<dbReference type="PANTHER" id="PTHR20842:SF0">
    <property type="entry name" value="ALPHA-ASPARTYL DIPEPTIDASE"/>
    <property type="match status" value="1"/>
</dbReference>
<dbReference type="PANTHER" id="PTHR20842">
    <property type="entry name" value="PROTEASE S51 ALPHA-ASPARTYL DIPEPTIDASE"/>
    <property type="match status" value="1"/>
</dbReference>
<dbReference type="Pfam" id="PF03575">
    <property type="entry name" value="Peptidase_S51"/>
    <property type="match status" value="1"/>
</dbReference>
<dbReference type="SUPFAM" id="SSF52317">
    <property type="entry name" value="Class I glutamine amidotransferase-like"/>
    <property type="match status" value="1"/>
</dbReference>
<feature type="chain" id="PRO_1000127252" description="Peptidase E">
    <location>
        <begin position="1"/>
        <end position="229"/>
    </location>
</feature>
<feature type="active site" description="Charge relay system" evidence="1">
    <location>
        <position position="120"/>
    </location>
</feature>
<feature type="active site" description="Charge relay system" evidence="1">
    <location>
        <position position="135"/>
    </location>
</feature>
<feature type="active site" description="Charge relay system" evidence="1">
    <location>
        <position position="157"/>
    </location>
</feature>
<gene>
    <name evidence="1" type="primary">pepE</name>
    <name type="ordered locus">SSPA3737</name>
</gene>
<name>PEPE_SALPK</name>
<organism>
    <name type="scientific">Salmonella paratyphi A (strain AKU_12601)</name>
    <dbReference type="NCBI Taxonomy" id="554290"/>
    <lineage>
        <taxon>Bacteria</taxon>
        <taxon>Pseudomonadati</taxon>
        <taxon>Pseudomonadota</taxon>
        <taxon>Gammaproteobacteria</taxon>
        <taxon>Enterobacterales</taxon>
        <taxon>Enterobacteriaceae</taxon>
        <taxon>Salmonella</taxon>
    </lineage>
</organism>
<accession>B5BJT4</accession>